<sequence>MQDGNFLLSALQPEAGVCSLALPSDLQLDRRGAEGPEAERLRAARVQEQVRARLLQLGQQPRHNGAAEPEPEAETARGTSRGQYHTLQAGFSSRSQGLSGDKTSGFRPIAKPAYSPASWSSRSAVDLSCSRRLSSAHNGGSAFGAAGYGGAQPTPPMPTRPVSFHERGGVGSRADYDTLSLRSLRLGPGGLDDRYSLVSEQLEPAATSTYRAFAYERQASSSSSRAGGLDWPEATEVSPSRTIRAPAVRTLQRFQSSHRSRGVGGAVPGAVLEPVARAPSVRSLSLSLADSGHLPDVHGFNSYGSHRTLQRLSSGFDDIDLPSAVKYLMASDPNLQVLGAAYIQHKCYSDAAAKKQARSLQAVPRLVKLFNHANQEVQRHATGAMRNLIYDNADNKLALVEENGIFELLRTLREQDDELRKNVTGILWNLSSSDHLKDRLARDTLEQLTDLVLSPLSGAGGPPLIQQNASEAEIFYNATGFLRNLSSASQATRQKMRECHGLVDALVTSINHALDAGKCEDKSVENAVCVLRNLSYRLYDEMPPSALQRLEGRGRRDLAGAPPGEVVGCFTPQSRRLRELPLAADALTFAEVSKDPKGLEWLWSPQIVGLYNRLLQRCELNRHTTEAAAGALQNITAGDRRWAGVLSRLALEQERILNPLLDRVRTADHHQLRSLTGLIRNLSRNARNKDEMSTKVVSHLIEKLPGSVGEKSPPAEVLVNIIAVLNNLVVASPIAARDLLYFDGLRKLIFIKKKRDSPDSEKSSRAASSLLANLWQYNKLHRDFRAKGYRKEDFLGP</sequence>
<feature type="chain" id="PRO_0000064287" description="Plakophilin-3">
    <location>
        <begin position="1"/>
        <end position="797"/>
    </location>
</feature>
<feature type="repeat" description="ARM 1">
    <location>
        <begin position="305"/>
        <end position="348"/>
    </location>
</feature>
<feature type="repeat" description="ARM 2">
    <location>
        <begin position="351"/>
        <end position="390"/>
    </location>
</feature>
<feature type="repeat" description="ARM 3">
    <location>
        <begin position="393"/>
        <end position="432"/>
    </location>
</feature>
<feature type="repeat" description="ARM 4">
    <location>
        <begin position="449"/>
        <end position="487"/>
    </location>
</feature>
<feature type="repeat" description="ARM 5">
    <location>
        <begin position="491"/>
        <end position="536"/>
    </location>
</feature>
<feature type="repeat" description="ARM 6">
    <location>
        <begin position="596"/>
        <end position="637"/>
    </location>
</feature>
<feature type="repeat" description="ARM 7">
    <location>
        <begin position="645"/>
        <end position="684"/>
    </location>
</feature>
<feature type="repeat" description="ARM 8">
    <location>
        <begin position="689"/>
        <end position="730"/>
    </location>
</feature>
<feature type="region of interest" description="Disordered" evidence="2">
    <location>
        <begin position="56"/>
        <end position="82"/>
    </location>
</feature>
<feature type="region of interest" description="Required for interaction with SFN" evidence="6">
    <location>
        <begin position="283"/>
        <end position="288"/>
    </location>
</feature>
<feature type="region of interest" description="Required for interaction with GSK3B" evidence="13">
    <location>
        <begin position="294"/>
        <end position="724"/>
    </location>
</feature>
<feature type="region of interest" description="Required for binding to PKP2 mRNA" evidence="9">
    <location>
        <begin position="516"/>
        <end position="797"/>
    </location>
</feature>
<feature type="site" description="Interacts with SFN" evidence="11">
    <location>
        <position position="285"/>
    </location>
</feature>
<feature type="modified residue" description="Omega-N-methylarginine" evidence="22">
    <location>
        <position position="81"/>
    </location>
</feature>
<feature type="modified residue" description="Phosphoserine" evidence="1">
    <location>
        <position position="123"/>
    </location>
</feature>
<feature type="modified residue" description="Phosphoserine" evidence="18 21">
    <location>
        <position position="180"/>
    </location>
</feature>
<feature type="modified residue" description="Phosphoserine" evidence="21">
    <location>
        <position position="183"/>
    </location>
</feature>
<feature type="modified residue" description="Phosphotyrosine; by SRC" evidence="10">
    <location>
        <position position="195"/>
    </location>
</feature>
<feature type="modified residue" description="Phosphoserine" evidence="17 18 19 21">
    <location>
        <position position="238"/>
    </location>
</feature>
<feature type="modified residue" description="Phosphoserine" evidence="18">
    <location>
        <position position="240"/>
    </location>
</feature>
<feature type="modified residue" description="Phosphothreonine" evidence="21">
    <location>
        <position position="250"/>
    </location>
</feature>
<feature type="modified residue" description="Omega-N-methylarginine" evidence="22">
    <location>
        <position position="261"/>
    </location>
</feature>
<feature type="modified residue" description="Phosphoserine" evidence="6">
    <location>
        <position position="285"/>
    </location>
</feature>
<feature type="modified residue" description="Phosphoserine" evidence="18 19 21">
    <location>
        <position position="313"/>
    </location>
</feature>
<feature type="modified residue" description="Phosphoserine" evidence="18 19 20 21">
    <location>
        <position position="314"/>
    </location>
</feature>
<feature type="modified residue" description="Phosphoserine" evidence="21">
    <location>
        <position position="331"/>
    </location>
</feature>
<feature type="splice variant" id="VSP_053646" description="In isoform PKP3b." evidence="14 15">
    <original>MQDGNFLLSALQ</original>
    <variation>MESWTPRPSAVASGMSWEAGGIRTTSR</variation>
    <location>
        <begin position="1"/>
        <end position="12"/>
    </location>
</feature>
<feature type="mutagenesis site" description="Abolishes interaction with SFN." evidence="6 11">
    <original>S</original>
    <variation>A</variation>
    <location>
        <position position="285"/>
    </location>
</feature>
<feature type="sequence conflict" description="In Ref. 4; BAD97231." evidence="16" ref="4">
    <original>V</original>
    <variation>A</variation>
    <location>
        <position position="719"/>
    </location>
</feature>
<feature type="sequence conflict" description="In Ref. 4; BAD97231." evidence="16" ref="4">
    <original>V</original>
    <variation>G</variation>
    <location>
        <position position="730"/>
    </location>
</feature>
<organism>
    <name type="scientific">Homo sapiens</name>
    <name type="common">Human</name>
    <dbReference type="NCBI Taxonomy" id="9606"/>
    <lineage>
        <taxon>Eukaryota</taxon>
        <taxon>Metazoa</taxon>
        <taxon>Chordata</taxon>
        <taxon>Craniata</taxon>
        <taxon>Vertebrata</taxon>
        <taxon>Euteleostomi</taxon>
        <taxon>Mammalia</taxon>
        <taxon>Eutheria</taxon>
        <taxon>Euarchontoglires</taxon>
        <taxon>Primates</taxon>
        <taxon>Haplorrhini</taxon>
        <taxon>Catarrhini</taxon>
        <taxon>Hominidae</taxon>
        <taxon>Homo</taxon>
    </lineage>
</organism>
<evidence type="ECO:0000250" key="1">
    <source>
        <dbReference type="UniProtKB" id="Q9QY23"/>
    </source>
</evidence>
<evidence type="ECO:0000256" key="2">
    <source>
        <dbReference type="SAM" id="MobiDB-lite"/>
    </source>
</evidence>
<evidence type="ECO:0000269" key="3">
    <source>
    </source>
</evidence>
<evidence type="ECO:0000269" key="4">
    <source>
    </source>
</evidence>
<evidence type="ECO:0000269" key="5">
    <source>
    </source>
</evidence>
<evidence type="ECO:0000269" key="6">
    <source>
    </source>
</evidence>
<evidence type="ECO:0000269" key="7">
    <source>
    </source>
</evidence>
<evidence type="ECO:0000269" key="8">
    <source>
    </source>
</evidence>
<evidence type="ECO:0000269" key="9">
    <source>
    </source>
</evidence>
<evidence type="ECO:0000269" key="10">
    <source>
    </source>
</evidence>
<evidence type="ECO:0000269" key="11">
    <source>
    </source>
</evidence>
<evidence type="ECO:0000269" key="12">
    <source>
    </source>
</evidence>
<evidence type="ECO:0000269" key="13">
    <source>
    </source>
</evidence>
<evidence type="ECO:0000303" key="14">
    <source>
    </source>
</evidence>
<evidence type="ECO:0000303" key="15">
    <source>
    </source>
</evidence>
<evidence type="ECO:0000305" key="16"/>
<evidence type="ECO:0007744" key="17">
    <source>
    </source>
</evidence>
<evidence type="ECO:0007744" key="18">
    <source>
    </source>
</evidence>
<evidence type="ECO:0007744" key="19">
    <source>
    </source>
</evidence>
<evidence type="ECO:0007744" key="20">
    <source>
    </source>
</evidence>
<evidence type="ECO:0007744" key="21">
    <source>
    </source>
</evidence>
<evidence type="ECO:0007744" key="22">
    <source>
    </source>
</evidence>
<protein>
    <recommendedName>
        <fullName>Plakophilin-3</fullName>
    </recommendedName>
</protein>
<gene>
    <name type="primary">PKP3</name>
</gene>
<reference key="1">
    <citation type="journal article" date="1999" name="Differentiation">
        <title>Plakophilin 3 -- a novel cell-type-specific desmosomal plaque protein.</title>
        <authorList>
            <person name="Schmidt A."/>
            <person name="Langbein L."/>
            <person name="Praetzel S."/>
            <person name="Rode M."/>
            <person name="Rackwitz H.-R."/>
            <person name="Franke W.W."/>
        </authorList>
    </citation>
    <scope>NUCLEOTIDE SEQUENCE [MRNA] (ISOFORM PKP3A)</scope>
    <scope>SUBCELLULAR LOCATION</scope>
    <scope>TISSUE SPECIFICITY</scope>
    <source>
        <tissue>Colon carcinoma</tissue>
    </source>
</reference>
<reference key="2">
    <citation type="journal article" date="1999" name="J. Cell Sci.">
        <title>Plakophilin-3, a novel armadillo-like protein present in nuclei and desmosomes of epithelial cells.</title>
        <authorList>
            <person name="Bonne S."/>
            <person name="van Hengel J."/>
            <person name="Nollet F."/>
            <person name="Kools P."/>
            <person name="van Roy F."/>
        </authorList>
    </citation>
    <scope>NUCLEOTIDE SEQUENCE [MRNA] (ISOFORM PKP3A)</scope>
</reference>
<reference key="3">
    <citation type="journal article" date="2014" name="Cell Tissue Res.">
        <title>An alternative promoter of the human plakophilin-3 gene controls the expression of the new isoform PKP3b.</title>
        <authorList>
            <person name="Muhmer M."/>
            <person name="Ditthardt D."/>
            <person name="Jakel J."/>
            <person name="Wischmann V."/>
            <person name="Moll R."/>
            <person name="Schmidt A."/>
        </authorList>
    </citation>
    <scope>NUCLEOTIDE SEQUENCE [MRNA] (ISOFORM PKP3B)</scope>
    <scope>ALTERNATIVE PROMOTER USAGE</scope>
    <scope>SUBCELLULAR LOCATION (ISOFORMS PKP3A AND PKP3B)</scope>
    <scope>TISSUE SPECIFICITY (ISOFORMS PKP3A AND PKP3B)</scope>
</reference>
<reference key="4">
    <citation type="submission" date="2005-04" db="EMBL/GenBank/DDBJ databases">
        <authorList>
            <person name="Totoki Y."/>
            <person name="Toyoda A."/>
            <person name="Takeda T."/>
            <person name="Sakaki Y."/>
            <person name="Tanaka A."/>
            <person name="Yokoyama S."/>
        </authorList>
    </citation>
    <scope>NUCLEOTIDE SEQUENCE [LARGE SCALE MRNA] (ISOFORM PKP3A)</scope>
    <source>
        <tissue>Colon</tissue>
    </source>
</reference>
<reference key="5">
    <citation type="journal article" date="2004" name="Genome Res.">
        <title>The status, quality, and expansion of the NIH full-length cDNA project: the Mammalian Gene Collection (MGC).</title>
        <authorList>
            <consortium name="The MGC Project Team"/>
        </authorList>
    </citation>
    <scope>NUCLEOTIDE SEQUENCE [LARGE SCALE MRNA] (ISOFORM PKP3A)</scope>
    <source>
        <tissue>Placenta</tissue>
    </source>
</reference>
<reference key="6">
    <citation type="journal article" date="2006" name="Genome Res.">
        <title>Diversification of transcriptional modulation: large-scale identification and characterization of putative alternative promoters of human genes.</title>
        <authorList>
            <person name="Kimura K."/>
            <person name="Wakamatsu A."/>
            <person name="Suzuki Y."/>
            <person name="Ota T."/>
            <person name="Nishikawa T."/>
            <person name="Yamashita R."/>
            <person name="Yamamoto J."/>
            <person name="Sekine M."/>
            <person name="Tsuritani K."/>
            <person name="Wakaguri H."/>
            <person name="Ishii S."/>
            <person name="Sugiyama T."/>
            <person name="Saito K."/>
            <person name="Isono Y."/>
            <person name="Irie R."/>
            <person name="Kushida N."/>
            <person name="Yoneyama T."/>
            <person name="Otsuka R."/>
            <person name="Kanda K."/>
            <person name="Yokoi T."/>
            <person name="Kondo H."/>
            <person name="Wagatsuma M."/>
            <person name="Murakawa K."/>
            <person name="Ishida S."/>
            <person name="Ishibashi T."/>
            <person name="Takahashi-Fujii A."/>
            <person name="Tanase T."/>
            <person name="Nagai K."/>
            <person name="Kikuchi H."/>
            <person name="Nakai K."/>
            <person name="Isogai T."/>
            <person name="Sugano S."/>
        </authorList>
    </citation>
    <scope>NUCLEOTIDE SEQUENCE [LARGE SCALE MRNA] OF 1-178 (ISOFORM PKP3B)</scope>
    <source>
        <tissue>Tongue</tissue>
    </source>
</reference>
<reference key="7">
    <citation type="journal article" date="2006" name="Nat. Biotechnol.">
        <title>A probability-based approach for high-throughput protein phosphorylation analysis and site localization.</title>
        <authorList>
            <person name="Beausoleil S.A."/>
            <person name="Villen J."/>
            <person name="Gerber S.A."/>
            <person name="Rush J."/>
            <person name="Gygi S.P."/>
        </authorList>
    </citation>
    <scope>PHOSPHORYLATION [LARGE SCALE ANALYSIS] AT SER-238</scope>
    <scope>IDENTIFICATION BY MASS SPECTROMETRY [LARGE SCALE ANALYSIS]</scope>
    <source>
        <tissue>Cervix carcinoma</tissue>
    </source>
</reference>
<reference key="8">
    <citation type="journal article" date="2008" name="Mol. Cell">
        <title>Kinase-selective enrichment enables quantitative phosphoproteomics of the kinome across the cell cycle.</title>
        <authorList>
            <person name="Daub H."/>
            <person name="Olsen J.V."/>
            <person name="Bairlein M."/>
            <person name="Gnad F."/>
            <person name="Oppermann F.S."/>
            <person name="Korner R."/>
            <person name="Greff Z."/>
            <person name="Keri G."/>
            <person name="Stemmann O."/>
            <person name="Mann M."/>
        </authorList>
    </citation>
    <scope>IDENTIFICATION BY MASS SPECTROMETRY [LARGE SCALE ANALYSIS]</scope>
    <source>
        <tissue>Cervix carcinoma</tissue>
    </source>
</reference>
<reference key="9">
    <citation type="journal article" date="2008" name="Proc. Natl. Acad. Sci. U.S.A.">
        <title>A quantitative atlas of mitotic phosphorylation.</title>
        <authorList>
            <person name="Dephoure N."/>
            <person name="Zhou C."/>
            <person name="Villen J."/>
            <person name="Beausoleil S.A."/>
            <person name="Bakalarski C.E."/>
            <person name="Elledge S.J."/>
            <person name="Gygi S.P."/>
        </authorList>
    </citation>
    <scope>PHOSPHORYLATION [LARGE SCALE ANALYSIS] AT SER-180; SER-238; SER-240; SER-313 AND SER-314</scope>
    <scope>IDENTIFICATION BY MASS SPECTROMETRY [LARGE SCALE ANALYSIS]</scope>
    <source>
        <tissue>Cervix carcinoma</tissue>
    </source>
</reference>
<reference key="10">
    <citation type="journal article" date="2009" name="Mol. Cell. Proteomics">
        <title>Large-scale proteomics analysis of the human kinome.</title>
        <authorList>
            <person name="Oppermann F.S."/>
            <person name="Gnad F."/>
            <person name="Olsen J.V."/>
            <person name="Hornberger R."/>
            <person name="Greff Z."/>
            <person name="Keri G."/>
            <person name="Mann M."/>
            <person name="Daub H."/>
        </authorList>
    </citation>
    <scope>IDENTIFICATION BY MASS SPECTROMETRY [LARGE SCALE ANALYSIS]</scope>
</reference>
<reference key="11">
    <citation type="journal article" date="2010" name="J. Invest. Dermatol.">
        <title>Plakophilin-1 localizes to the nucleus and interacts with single-stranded DNA.</title>
        <authorList>
            <person name="Sobolik-Delmaire T."/>
            <person name="Reddy R."/>
            <person name="Pashaj A."/>
            <person name="Roberts B.J."/>
            <person name="Wahl J.K. III"/>
        </authorList>
    </citation>
    <scope>SUBCELLULAR LOCATION</scope>
</reference>
<reference key="12">
    <citation type="journal article" date="2010" name="Sci. Signal.">
        <title>Quantitative phosphoproteomics reveals widespread full phosphorylation site occupancy during mitosis.</title>
        <authorList>
            <person name="Olsen J.V."/>
            <person name="Vermeulen M."/>
            <person name="Santamaria A."/>
            <person name="Kumar C."/>
            <person name="Miller M.L."/>
            <person name="Jensen L.J."/>
            <person name="Gnad F."/>
            <person name="Cox J."/>
            <person name="Jensen T.S."/>
            <person name="Nigg E.A."/>
            <person name="Brunak S."/>
            <person name="Mann M."/>
        </authorList>
    </citation>
    <scope>PHOSPHORYLATION [LARGE SCALE ANALYSIS] AT SER-238; SER-313 AND SER-314</scope>
    <scope>IDENTIFICATION BY MASS SPECTROMETRY [LARGE SCALE ANALYSIS]</scope>
    <source>
        <tissue>Cervix carcinoma</tissue>
    </source>
</reference>
<reference key="13">
    <citation type="journal article" date="2011" name="BMC Syst. Biol.">
        <title>Initial characterization of the human central proteome.</title>
        <authorList>
            <person name="Burkard T.R."/>
            <person name="Planyavsky M."/>
            <person name="Kaupe I."/>
            <person name="Breitwieser F.P."/>
            <person name="Buerckstuemmer T."/>
            <person name="Bennett K.L."/>
            <person name="Superti-Furga G."/>
            <person name="Colinge J."/>
        </authorList>
    </citation>
    <scope>IDENTIFICATION BY MASS SPECTROMETRY [LARGE SCALE ANALYSIS]</scope>
</reference>
<reference key="14">
    <citation type="journal article" date="2011" name="Cell. Mol. Life Sci.">
        <title>E-cadherin and plakoglobin recruit plakophilin3 to the cell border to initiate desmosome assembly.</title>
        <authorList>
            <person name="Gosavi P."/>
            <person name="Kundu S.T."/>
            <person name="Khapare N."/>
            <person name="Sehgal L."/>
            <person name="Karkhanis M.S."/>
            <person name="Dalal S.N."/>
        </authorList>
    </citation>
    <scope>FUNCTION</scope>
    <scope>INTERACTION WITH JUP</scope>
    <scope>SUBCELLULAR LOCATION</scope>
</reference>
<reference key="15">
    <citation type="journal article" date="2011" name="Sci. Signal.">
        <title>System-wide temporal characterization of the proteome and phosphoproteome of human embryonic stem cell differentiation.</title>
        <authorList>
            <person name="Rigbolt K.T."/>
            <person name="Prokhorova T.A."/>
            <person name="Akimov V."/>
            <person name="Henningsen J."/>
            <person name="Johansen P.T."/>
            <person name="Kratchmarova I."/>
            <person name="Kassem M."/>
            <person name="Mann M."/>
            <person name="Olsen J.V."/>
            <person name="Blagoev B."/>
        </authorList>
    </citation>
    <scope>PHOSPHORYLATION [LARGE SCALE ANALYSIS] AT SER-314</scope>
    <scope>IDENTIFICATION BY MASS SPECTROMETRY [LARGE SCALE ANALYSIS]</scope>
</reference>
<reference key="16">
    <citation type="journal article" date="2013" name="J. Proteome Res.">
        <title>Toward a comprehensive characterization of a human cancer cell phosphoproteome.</title>
        <authorList>
            <person name="Zhou H."/>
            <person name="Di Palma S."/>
            <person name="Preisinger C."/>
            <person name="Peng M."/>
            <person name="Polat A.N."/>
            <person name="Heck A.J."/>
            <person name="Mohammed S."/>
        </authorList>
    </citation>
    <scope>PHOSPHORYLATION [LARGE SCALE ANALYSIS] AT SER-180; SER-183; SER-238; THR-250; SER-313; SER-314 AND SER-331</scope>
    <scope>IDENTIFICATION BY MASS SPECTROMETRY [LARGE SCALE ANALYSIS]</scope>
    <source>
        <tissue>Cervix carcinoma</tissue>
        <tissue>Erythroleukemia</tissue>
    </source>
</reference>
<reference key="17">
    <citation type="journal article" date="2013" name="PLoS ONE">
        <title>Stratifin (14-3-3 sigma) limits plakophilin-3 exchange with the desmosomal plaque.</title>
        <authorList>
            <person name="Roberts B.J."/>
            <person name="Reddy R."/>
            <person name="Wahl J.K. III"/>
        </authorList>
    </citation>
    <scope>FUNCTION</scope>
    <scope>INTERACTION WITH SFN</scope>
    <scope>SUBCELLULAR LOCATION</scope>
    <scope>PHOSPHORYLATION AT SER-285</scope>
    <scope>MUTAGENESIS OF SER-285</scope>
</reference>
<reference key="18">
    <citation type="journal article" date="2014" name="Mol. Biol. Cell">
        <title>Plakophilin 3 mediates Rap1-dependent desmosome assembly and adherens junction maturation.</title>
        <authorList>
            <person name="Todorovic V."/>
            <person name="Koetsier J.L."/>
            <person name="Godsel L.M."/>
            <person name="Green K.J."/>
        </authorList>
    </citation>
    <scope>FUNCTION</scope>
    <scope>IDENTIFICATION IN A COMPLEX WITH RAP1A AND CDH1</scope>
    <scope>INTERACTION WITH CDH1 AND RAP1A</scope>
</reference>
<reference key="19">
    <citation type="journal article" date="2014" name="Mol. Cell. Biol.">
        <title>Plakophilins 1 and 3 bind to FXR1 and thereby influence the mRNA stability of desmosomal proteins.</title>
        <authorList>
            <person name="Fischer-Keso R."/>
            <person name="Breuninger S."/>
            <person name="Hofmann S."/>
            <person name="Henn M."/>
            <person name="Roehrig T."/>
            <person name="Stroebel P."/>
            <person name="Stoecklin G."/>
            <person name="Hofmann I."/>
        </authorList>
    </citation>
    <scope>FUNCTION</scope>
    <scope>INTERACTION WITH FXR1</scope>
</reference>
<reference key="20">
    <citation type="journal article" date="2014" name="Mol. Cell. Proteomics">
        <title>Immunoaffinity enrichment and mass spectrometry analysis of protein methylation.</title>
        <authorList>
            <person name="Guo A."/>
            <person name="Gu H."/>
            <person name="Zhou J."/>
            <person name="Mulhern D."/>
            <person name="Wang Y."/>
            <person name="Lee K.A."/>
            <person name="Yang V."/>
            <person name="Aguiar M."/>
            <person name="Kornhauser J."/>
            <person name="Jia X."/>
            <person name="Ren J."/>
            <person name="Beausoleil S.A."/>
            <person name="Silva J.C."/>
            <person name="Vemulapalli V."/>
            <person name="Bedford M.T."/>
            <person name="Comb M.J."/>
        </authorList>
    </citation>
    <scope>METHYLATION [LARGE SCALE ANALYSIS] AT ARG-81 AND ARG-261</scope>
    <scope>IDENTIFICATION BY MASS SPECTROMETRY [LARGE SCALE ANALYSIS]</scope>
    <source>
        <tissue>Colon carcinoma</tissue>
    </source>
</reference>
<reference key="21">
    <citation type="journal article" date="2015" name="Cell Tissue Res.">
        <title>c-Src mediated tyrosine phosphorylation of plakophilin 3 as a new mechanism to control desmosome composition in cells exposed to oxidative stress.</title>
        <authorList>
            <person name="Neuber S."/>
            <person name="Jaeger S."/>
            <person name="Meyer M."/>
            <person name="Wischmann V."/>
            <person name="Koch P.J."/>
            <person name="Moll R."/>
            <person name="Schmidt A."/>
        </authorList>
    </citation>
    <scope>SUBCELLULAR LOCATION</scope>
    <scope>PHOSPHORYLATION AT TYR-195</scope>
</reference>
<reference key="22">
    <citation type="journal article" date="2018" name="J. Cell Sci.">
        <title>14-3-3 proteins regulate desmosomal adhesion via plakophilins.</title>
        <authorList>
            <person name="Rietscher K."/>
            <person name="Keil R."/>
            <person name="Jordan A."/>
            <person name="Hatzfeld M."/>
        </authorList>
    </citation>
    <scope>INTERACTION WITH SFN</scope>
    <scope>MUTAGENESIS OF SER-285</scope>
</reference>
<reference key="23">
    <citation type="journal article" date="2019" name="Cell. Mol. Life Sci.">
        <title>Plakophilin 1 but not plakophilin 3 regulates desmoglein clustering.</title>
        <authorList>
            <person name="Fuchs M."/>
            <person name="Foresti M."/>
            <person name="Radeva M.Y."/>
            <person name="Kugelmann D."/>
            <person name="Keil R."/>
            <person name="Hatzfeld M."/>
            <person name="Spindler V."/>
            <person name="Waschke J."/>
            <person name="Vielmuth F."/>
        </authorList>
    </citation>
    <scope>SUBCELLULAR LOCATION</scope>
</reference>
<reference key="24">
    <citation type="journal article" date="2021" name="Biochem. Biophys. Res. Commun.">
        <title>A catenin of the plakophilin-subfamily, Pkp3, responds to canonical-Wnt pathway components and signals.</title>
        <authorList>
            <person name="Hong J.Y."/>
            <person name="Zapata J."/>
            <person name="Blackburn A."/>
            <person name="Baumert R."/>
            <person name="Bae S.M."/>
            <person name="Ji H."/>
            <person name="Nam H.J."/>
            <person name="Miller R.K."/>
            <person name="McCrea P.D."/>
        </authorList>
    </citation>
    <scope>FUNCTION</scope>
    <scope>INTERACTION WITH GSK3B</scope>
    <scope>SUBCELLULAR LOCATION</scope>
</reference>
<comment type="function">
    <text evidence="1 5 6 8 9 13">A component of desmosome cell-cell junctions which are required for positive regulation of cellular adhesion (PubMed:24124604). Required for the localization of DSG2, DSP and PKP2 to mature desmosome junctions (PubMed:20859650). May also play a role in the maintenance of DSG3 protein abundance in keratinocytes (By similarity). Required for the formation of DSP-containing desmosome precursors in the cytoplasm during desmosome assembly (PubMed:25208567). Also regulates the accumulation of CDH1 to mature desmosome junctions, via cAMP-dependent signaling and its interaction with activated RAP1A (PubMed:25208567). Positively regulates the stabilization of PKP2 mRNA and therefore protein abundance, via its interaction with FXR1, may also regulate the protein abundance of DSP via the same mechanism (PubMed:25225333). May also regulate the protein abundance of the desmosome component PKP1 (By similarity). Required for the organization of desmosome junctions at intercellular borders between basal keratinocytes of the epidermis, as a result plays a role in maintenance of the dermal barrier and regulation of the dermal inflammatory response (By similarity). Required during epidermal keratinocyte differentiation for cell adherence at tricellular cell-cell contacts, via regulation of the timely formation of adherens junctions and desmosomes in a calcium-dependent manner, and may also play a role in the organization of the intracellular actin fiber belt (By similarity). Acts as a negative regulator of the inflammatory response in hematopoietic cells of the skin and intestine, via modulation of proinflammatory cytokine production (By similarity). Important for epithelial barrier maintenance in the intestine to reduce intestinal permeability, thereby plays a role in protection from intestinal-derived endotoxemia (By similarity). Required for the development of hair follicles, via a role in the regulation of inner root sheaf length, correct alignment and anterior-posterior polarity of hair follicles (By similarity). Promotes proliferation and cell-cycle G1/S phase transition of keratinocytes (By similarity). Promotes E2F1-driven transcription of G1/S phase promoting genes by acting to release E2F1 from its inhibitory interaction with RB1, via sequestering RB1 and CDKN1A to the cytoplasm and thereby increasing CDK4- and CDK6-driven phosphorylation of RB1 (By similarity). May act as a scaffold protein to facilitate MAPK phosphorylation of RPS6KA protein family members and subsequently promote downstream EGFR signaling (By similarity). May play a role in the positive regulation of transcription of Wnt-mediated TCF-responsive target genes (PubMed:34058472).</text>
</comment>
<comment type="subunit">
    <text evidence="1 5 6 8 9 11 13">Found in a complex composed of CDH1, RAP1A and PKP3; PKP3 acts as a scaffold protein within the complex, the complex is required for CDH1 localization to mature desmosome cell junctions (PubMed:25208567). Interacts with FXR1; the interaction facilitates the binding of PKP3 to PKP2 mRNA (PubMed:25225333). Interacts (via ARM repeats) with GSK3B; the interaction may be involved in PKP3 protein degradation (PubMed:34058472). Interacts with hyperphosphorylated and hypophosphorylated RB1; the interaction inhibits RB1 interaction with and repression of the transcription factor E2F1, potentially via sequestering RB1 to the cytoplasm (By similarity). Interacts with CDKN1A; the interaction sequesters CDKN1A to the cytoplasm thereby repressing its role as an inhibitor of CDK4- and CDK6-driven RB1 phosphorylation (By similarity). Interacts (via N-terminus) with SFN; the interaction maintains the cytoplasmic pool of PKP3, facilitates PKP3 exchange at desmosomes and restricts PKP3 localization to existing desmosome cell junctions (PubMed:24124604, PubMed:29678907). Interacts (via N-terminus) with JUP; the interaction is required for PKP3 localization to desmosome cell-cell junctions (PubMed:20859650).</text>
</comment>
<comment type="interaction">
    <interactant intactId="EBI-2880227">
        <id>Q9Y446</id>
    </interactant>
    <interactant intactId="EBI-744302">
        <id>P14136</id>
        <label>GFAP</label>
    </interactant>
    <organismsDiffer>false</organismsDiffer>
    <experiments>3</experiments>
</comment>
<comment type="interaction">
    <interactant intactId="EBI-2880227">
        <id>Q9Y446</id>
    </interactant>
    <interactant intactId="EBI-10220600">
        <id>Q8NA54</id>
        <label>IQUB</label>
    </interactant>
    <organismsDiffer>false</organismsDiffer>
    <experiments>3</experiments>
</comment>
<comment type="subcellular location">
    <subcellularLocation>
        <location evidence="6 13">Nucleus</location>
    </subcellularLocation>
    <subcellularLocation>
        <location evidence="3 4 5 6 10">Cell junction</location>
        <location evidence="3 4 5 6 10">Desmosome</location>
    </subcellularLocation>
    <subcellularLocation>
        <location evidence="6 10 13">Cytoplasm</location>
    </subcellularLocation>
    <subcellularLocation>
        <location evidence="10 12">Cell membrane</location>
        <topology evidence="16">Peripheral membrane protein</topology>
    </subcellularLocation>
    <subcellularLocation>
        <location evidence="1">Cell junction</location>
        <location evidence="1">Adherens junction</location>
    </subcellularLocation>
    <text evidence="1 6 13">Translocates to the nucleus following canonical WNT signaling activation by WNT3A (PubMed:34058472). Maintains a cytoplasmic pool which can then be translocated to the desmosome, the cytoplasmic pool is maintained through PKP3 interaction with SFN (PubMed:24124604). Aberrant increases in translocation to the desmosome result in cell junction instability and therefore decreased cell adhesion (PubMed:24124604). Partially colocalizes at cell junctions in a zipper-like pattern with DSP, CDH1, CTNNB1 and CTNND1 in the early stages of keratinocyte differentiation (By similarity). Moves to cell junctions at tricellular contacts as differentiation progresses and as epithelial sheet formation completes (By similarity).</text>
</comment>
<comment type="subcellular location">
    <molecule>Isoform PKP3a</molecule>
    <subcellularLocation>
        <location evidence="7">Cell junction</location>
        <location evidence="7">Desmosome</location>
    </subcellularLocation>
    <subcellularLocation>
        <location evidence="7">Cytoplasm</location>
    </subcellularLocation>
</comment>
<comment type="subcellular location">
    <molecule>Isoform PKP3b</molecule>
    <subcellularLocation>
        <location evidence="7">Cell junction</location>
        <location evidence="7">Desmosome</location>
    </subcellularLocation>
    <subcellularLocation>
        <location evidence="7">Cytoplasm</location>
    </subcellularLocation>
</comment>
<comment type="alternative products">
    <event type="alternative promoter"/>
    <isoform>
        <id>Q9Y446-1</id>
        <name>PKP3a</name>
        <sequence type="displayed"/>
    </isoform>
    <isoform>
        <id>Q9Y446-2</id>
        <name>PKP3b</name>
        <sequence type="described" ref="VSP_053646"/>
    </isoform>
</comment>
<comment type="tissue specificity">
    <text evidence="3">Expressed in the epidermis of the skin, in squamous non-cornifying epithelial cells in the vagina, single layer epithelia of the duodenum and pancreas acini and non-epithelial dendritic reticulum cells of lymph node follicles (at protein level).</text>
</comment>
<comment type="tissue specificity">
    <molecule>Isoform PKP3a</molecule>
    <text evidence="7">Expressed in the oral cavity mucosa, epidermis and small intestine epithelium (at protein level).</text>
</comment>
<comment type="tissue specificity">
    <molecule>Isoform PKP3b</molecule>
    <text evidence="7">Expressed in the oral cavity mucosa and epithelial cells of the crypts and villi in the small intestine (at protein level) (PubMed:24178805). Expressed in the epidermis with more abundant expression found in the basal and low spinous cells (at protein level) (PubMed:24178805).</text>
</comment>
<comment type="PTM">
    <text evidence="6 10">Phosphorylated at Ser-285 when localized to the cytoplasm, PKP3 at desmosome cell junctions is not phosphorylated (PubMed:24124604). Phosphorylation at Try-195 by SRC is induced by reactive oxygen species and potentially acts as a release mechanism from desmosome cell-cell junctions (PubMed:25501895).</text>
</comment>
<comment type="miscellaneous">
    <text evidence="10">Poorly differentiated, high Gleason grade prostate adenocarcinomas show an increase in phosphorylation at Tyr-195, potentially indicating a role for SRC-driven phosphorylation of PKP3 in the dedifferentiation of prostate tumor cells.</text>
</comment>
<comment type="similarity">
    <text evidence="16">Belongs to the beta-catenin family.</text>
</comment>
<proteinExistence type="evidence at protein level"/>
<name>PKP3_HUMAN</name>
<dbReference type="EMBL" id="Z98265">
    <property type="protein sequence ID" value="CAB44310.1"/>
    <property type="molecule type" value="mRNA"/>
</dbReference>
<dbReference type="EMBL" id="AF053719">
    <property type="protein sequence ID" value="AAF23050.1"/>
    <property type="molecule type" value="mRNA"/>
</dbReference>
<dbReference type="EMBL" id="FN421477">
    <property type="protein sequence ID" value="CAZ65731.1"/>
    <property type="molecule type" value="mRNA"/>
</dbReference>
<dbReference type="EMBL" id="AK223511">
    <property type="protein sequence ID" value="BAD97231.1"/>
    <property type="molecule type" value="mRNA"/>
</dbReference>
<dbReference type="EMBL" id="BC000081">
    <property type="protein sequence ID" value="AAH00081.1"/>
    <property type="molecule type" value="mRNA"/>
</dbReference>
<dbReference type="EMBL" id="DA439471">
    <property type="status" value="NOT_ANNOTATED_CDS"/>
    <property type="molecule type" value="mRNA"/>
</dbReference>
<dbReference type="CCDS" id="CCDS7695.1">
    <molecule id="Q9Y446-1"/>
</dbReference>
<dbReference type="RefSeq" id="NP_001289958.1">
    <molecule id="Q9Y446-2"/>
    <property type="nucleotide sequence ID" value="NM_001303029.2"/>
</dbReference>
<dbReference type="RefSeq" id="NP_009114.1">
    <molecule id="Q9Y446-1"/>
    <property type="nucleotide sequence ID" value="NM_007183.4"/>
</dbReference>
<dbReference type="EMDB" id="EMD-40675"/>
<dbReference type="SMR" id="Q9Y446"/>
<dbReference type="BioGRID" id="116357">
    <property type="interactions" value="157"/>
</dbReference>
<dbReference type="FunCoup" id="Q9Y446">
    <property type="interactions" value="720"/>
</dbReference>
<dbReference type="IntAct" id="Q9Y446">
    <property type="interactions" value="77"/>
</dbReference>
<dbReference type="MINT" id="Q9Y446"/>
<dbReference type="STRING" id="9606.ENSP00000331678"/>
<dbReference type="GlyGen" id="Q9Y446">
    <property type="glycosylation" value="2 sites, 1 O-linked glycan (1 site)"/>
</dbReference>
<dbReference type="iPTMnet" id="Q9Y446"/>
<dbReference type="PhosphoSitePlus" id="Q9Y446"/>
<dbReference type="SwissPalm" id="Q9Y446"/>
<dbReference type="BioMuta" id="PKP3"/>
<dbReference type="DMDM" id="20139301"/>
<dbReference type="CPTAC" id="CPTAC-990"/>
<dbReference type="jPOST" id="Q9Y446"/>
<dbReference type="MassIVE" id="Q9Y446"/>
<dbReference type="PaxDb" id="9606-ENSP00000331678"/>
<dbReference type="PeptideAtlas" id="Q9Y446"/>
<dbReference type="PRIDE" id="Q9Y446"/>
<dbReference type="ProteomicsDB" id="86098">
    <molecule id="Q9Y446-1"/>
</dbReference>
<dbReference type="Antibodypedia" id="4571">
    <property type="antibodies" value="291 antibodies from 34 providers"/>
</dbReference>
<dbReference type="DNASU" id="11187"/>
<dbReference type="Ensembl" id="ENST00000331563.7">
    <molecule id="Q9Y446-1"/>
    <property type="protein sequence ID" value="ENSP00000331678.2"/>
    <property type="gene ID" value="ENSG00000184363.10"/>
</dbReference>
<dbReference type="Ensembl" id="ENST00000534401.6">
    <molecule id="Q9Y446-2"/>
    <property type="protein sequence ID" value="ENSP00000434517.3"/>
    <property type="gene ID" value="ENSG00000184363.10"/>
</dbReference>
<dbReference type="GeneID" id="11187"/>
<dbReference type="KEGG" id="hsa:11187"/>
<dbReference type="MANE-Select" id="ENST00000331563.7">
    <property type="protein sequence ID" value="ENSP00000331678.2"/>
    <property type="RefSeq nucleotide sequence ID" value="NM_007183.4"/>
    <property type="RefSeq protein sequence ID" value="NP_009114.1"/>
</dbReference>
<dbReference type="UCSC" id="uc001lpc.3">
    <molecule id="Q9Y446-1"/>
    <property type="organism name" value="human"/>
</dbReference>
<dbReference type="AGR" id="HGNC:9025"/>
<dbReference type="CTD" id="11187"/>
<dbReference type="DisGeNET" id="11187"/>
<dbReference type="GeneCards" id="PKP3"/>
<dbReference type="HGNC" id="HGNC:9025">
    <property type="gene designation" value="PKP3"/>
</dbReference>
<dbReference type="HPA" id="ENSG00000184363">
    <property type="expression patterns" value="Tissue enhanced (esophagus, skin)"/>
</dbReference>
<dbReference type="MIM" id="605561">
    <property type="type" value="gene"/>
</dbReference>
<dbReference type="neXtProt" id="NX_Q9Y446"/>
<dbReference type="OpenTargets" id="ENSG00000184363"/>
<dbReference type="PharmGKB" id="PA33358"/>
<dbReference type="VEuPathDB" id="HostDB:ENSG00000184363"/>
<dbReference type="eggNOG" id="KOG1048">
    <property type="taxonomic scope" value="Eukaryota"/>
</dbReference>
<dbReference type="GeneTree" id="ENSGT00940000159515"/>
<dbReference type="HOGENOM" id="CLU_009111_2_0_1"/>
<dbReference type="InParanoid" id="Q9Y446"/>
<dbReference type="OMA" id="YAFERQM"/>
<dbReference type="PAN-GO" id="Q9Y446">
    <property type="GO annotations" value="7 GO annotations based on evolutionary models"/>
</dbReference>
<dbReference type="PhylomeDB" id="Q9Y446"/>
<dbReference type="TreeFam" id="TF321877"/>
<dbReference type="PathwayCommons" id="Q9Y446"/>
<dbReference type="Reactome" id="R-HSA-6805567">
    <property type="pathway name" value="Keratinization"/>
</dbReference>
<dbReference type="Reactome" id="R-HSA-6809371">
    <property type="pathway name" value="Formation of the cornified envelope"/>
</dbReference>
<dbReference type="SignaLink" id="Q9Y446"/>
<dbReference type="SIGNOR" id="Q9Y446"/>
<dbReference type="BioGRID-ORCS" id="11187">
    <property type="hits" value="9 hits in 1157 CRISPR screens"/>
</dbReference>
<dbReference type="CD-CODE" id="DEE660B4">
    <property type="entry name" value="Stress granule"/>
</dbReference>
<dbReference type="ChiTaRS" id="PKP3">
    <property type="organism name" value="human"/>
</dbReference>
<dbReference type="GeneWiki" id="PKP3"/>
<dbReference type="GenomeRNAi" id="11187"/>
<dbReference type="Pharos" id="Q9Y446">
    <property type="development level" value="Tbio"/>
</dbReference>
<dbReference type="PRO" id="PR:Q9Y446"/>
<dbReference type="Proteomes" id="UP000005640">
    <property type="component" value="Chromosome 11"/>
</dbReference>
<dbReference type="RNAct" id="Q9Y446">
    <property type="molecule type" value="protein"/>
</dbReference>
<dbReference type="Bgee" id="ENSG00000184363">
    <property type="expression patterns" value="Expressed in lower esophagus mucosa and 157 other cell types or tissues"/>
</dbReference>
<dbReference type="ExpressionAtlas" id="Q9Y446">
    <property type="expression patterns" value="baseline and differential"/>
</dbReference>
<dbReference type="GO" id="GO:0005912">
    <property type="term" value="C:adherens junction"/>
    <property type="evidence" value="ECO:0007005"/>
    <property type="project" value="BHF-UCL"/>
</dbReference>
<dbReference type="GO" id="GO:0030054">
    <property type="term" value="C:cell junction"/>
    <property type="evidence" value="ECO:0000314"/>
    <property type="project" value="HPA"/>
</dbReference>
<dbReference type="GO" id="GO:0005911">
    <property type="term" value="C:cell-cell junction"/>
    <property type="evidence" value="ECO:0000304"/>
    <property type="project" value="ProtInc"/>
</dbReference>
<dbReference type="GO" id="GO:0001533">
    <property type="term" value="C:cornified envelope"/>
    <property type="evidence" value="ECO:0000304"/>
    <property type="project" value="Reactome"/>
</dbReference>
<dbReference type="GO" id="GO:0005737">
    <property type="term" value="C:cytoplasm"/>
    <property type="evidence" value="ECO:0000314"/>
    <property type="project" value="UniProtKB"/>
</dbReference>
<dbReference type="GO" id="GO:0030057">
    <property type="term" value="C:desmosome"/>
    <property type="evidence" value="ECO:0000314"/>
    <property type="project" value="UniProtKB"/>
</dbReference>
<dbReference type="GO" id="GO:0005654">
    <property type="term" value="C:nucleoplasm"/>
    <property type="evidence" value="ECO:0000314"/>
    <property type="project" value="HPA"/>
</dbReference>
<dbReference type="GO" id="GO:0005634">
    <property type="term" value="C:nucleus"/>
    <property type="evidence" value="ECO:0000314"/>
    <property type="project" value="UniProtKB"/>
</dbReference>
<dbReference type="GO" id="GO:0005886">
    <property type="term" value="C:plasma membrane"/>
    <property type="evidence" value="ECO:0000314"/>
    <property type="project" value="UniProtKB"/>
</dbReference>
<dbReference type="GO" id="GO:0045294">
    <property type="term" value="F:alpha-catenin binding"/>
    <property type="evidence" value="ECO:0000353"/>
    <property type="project" value="BHF-UCL"/>
</dbReference>
<dbReference type="GO" id="GO:0045296">
    <property type="term" value="F:cadherin binding"/>
    <property type="evidence" value="ECO:0000318"/>
    <property type="project" value="GO_Central"/>
</dbReference>
<dbReference type="GO" id="GO:0098641">
    <property type="term" value="F:cadherin binding involved in cell-cell adhesion"/>
    <property type="evidence" value="ECO:0007005"/>
    <property type="project" value="BHF-UCL"/>
</dbReference>
<dbReference type="GO" id="GO:0050839">
    <property type="term" value="F:cell adhesion molecule binding"/>
    <property type="evidence" value="ECO:0000353"/>
    <property type="project" value="UniProtKB"/>
</dbReference>
<dbReference type="GO" id="GO:0019899">
    <property type="term" value="F:enzyme binding"/>
    <property type="evidence" value="ECO:0000353"/>
    <property type="project" value="CAFA"/>
</dbReference>
<dbReference type="GO" id="GO:0003723">
    <property type="term" value="F:RNA binding"/>
    <property type="evidence" value="ECO:0007669"/>
    <property type="project" value="UniProtKB-KW"/>
</dbReference>
<dbReference type="GO" id="GO:0030036">
    <property type="term" value="P:actin cytoskeleton organization"/>
    <property type="evidence" value="ECO:0000250"/>
    <property type="project" value="UniProtKB"/>
</dbReference>
<dbReference type="GO" id="GO:0098609">
    <property type="term" value="P:cell-cell adhesion"/>
    <property type="evidence" value="ECO:0000318"/>
    <property type="project" value="GO_Central"/>
</dbReference>
<dbReference type="GO" id="GO:0002159">
    <property type="term" value="P:desmosome assembly"/>
    <property type="evidence" value="ECO:0000315"/>
    <property type="project" value="UniProtKB"/>
</dbReference>
<dbReference type="GO" id="GO:0002934">
    <property type="term" value="P:desmosome organization"/>
    <property type="evidence" value="ECO:0000250"/>
    <property type="project" value="UniProtKB"/>
</dbReference>
<dbReference type="GO" id="GO:0090136">
    <property type="term" value="P:epithelial cell-cell adhesion"/>
    <property type="evidence" value="ECO:0000250"/>
    <property type="project" value="UniProtKB"/>
</dbReference>
<dbReference type="GO" id="GO:0010669">
    <property type="term" value="P:epithelial structure maintenance"/>
    <property type="evidence" value="ECO:0000250"/>
    <property type="project" value="UniProtKB"/>
</dbReference>
<dbReference type="GO" id="GO:1902373">
    <property type="term" value="P:negative regulation of mRNA catabolic process"/>
    <property type="evidence" value="ECO:0000315"/>
    <property type="project" value="CAFA"/>
</dbReference>
<dbReference type="GO" id="GO:0045785">
    <property type="term" value="P:positive regulation of cell adhesion"/>
    <property type="evidence" value="ECO:0000315"/>
    <property type="project" value="UniProtKB"/>
</dbReference>
<dbReference type="GO" id="GO:1902808">
    <property type="term" value="P:positive regulation of cell cycle G1/S phase transition"/>
    <property type="evidence" value="ECO:0000250"/>
    <property type="project" value="UniProtKB"/>
</dbReference>
<dbReference type="GO" id="GO:0022409">
    <property type="term" value="P:positive regulation of cell-cell adhesion"/>
    <property type="evidence" value="ECO:0000315"/>
    <property type="project" value="UniProtKB"/>
</dbReference>
<dbReference type="GO" id="GO:1903829">
    <property type="term" value="P:positive regulation of protein localization"/>
    <property type="evidence" value="ECO:0000250"/>
    <property type="project" value="UniProtKB"/>
</dbReference>
<dbReference type="GO" id="GO:0072659">
    <property type="term" value="P:protein localization to plasma membrane"/>
    <property type="evidence" value="ECO:0000315"/>
    <property type="project" value="UniProtKB"/>
</dbReference>
<dbReference type="GO" id="GO:0002718">
    <property type="term" value="P:regulation of cytokine production involved in immune response"/>
    <property type="evidence" value="ECO:0000250"/>
    <property type="project" value="UniProtKB"/>
</dbReference>
<dbReference type="GO" id="GO:0051797">
    <property type="term" value="P:regulation of hair follicle development"/>
    <property type="evidence" value="ECO:0000250"/>
    <property type="project" value="UniProtKB"/>
</dbReference>
<dbReference type="FunFam" id="1.25.10.10:FF:000199">
    <property type="entry name" value="plakophilin-3"/>
    <property type="match status" value="1"/>
</dbReference>
<dbReference type="Gene3D" id="1.25.10.10">
    <property type="entry name" value="Leucine-rich Repeat Variant"/>
    <property type="match status" value="1"/>
</dbReference>
<dbReference type="InterPro" id="IPR011989">
    <property type="entry name" value="ARM-like"/>
</dbReference>
<dbReference type="InterPro" id="IPR016024">
    <property type="entry name" value="ARM-type_fold"/>
</dbReference>
<dbReference type="InterPro" id="IPR000225">
    <property type="entry name" value="Armadillo"/>
</dbReference>
<dbReference type="InterPro" id="IPR028435">
    <property type="entry name" value="Plakophilin/d_Catenin"/>
</dbReference>
<dbReference type="PANTHER" id="PTHR10372:SF1">
    <property type="entry name" value="PLAKOPHILIN-3"/>
    <property type="match status" value="1"/>
</dbReference>
<dbReference type="PANTHER" id="PTHR10372">
    <property type="entry name" value="PLAKOPHILLIN-RELATED"/>
    <property type="match status" value="1"/>
</dbReference>
<dbReference type="Pfam" id="PF00514">
    <property type="entry name" value="Arm"/>
    <property type="match status" value="2"/>
</dbReference>
<dbReference type="SMART" id="SM00185">
    <property type="entry name" value="ARM"/>
    <property type="match status" value="4"/>
</dbReference>
<dbReference type="SUPFAM" id="SSF48371">
    <property type="entry name" value="ARM repeat"/>
    <property type="match status" value="1"/>
</dbReference>
<dbReference type="PROSITE" id="PS50176">
    <property type="entry name" value="ARM_REPEAT"/>
    <property type="match status" value="1"/>
</dbReference>
<accession>Q9Y446</accession>
<accession>F8J390</accession>
<accession>Q53EX8</accession>
<keyword id="KW-0877">Alternative promoter usage</keyword>
<keyword id="KW-0130">Cell adhesion</keyword>
<keyword id="KW-0965">Cell junction</keyword>
<keyword id="KW-1003">Cell membrane</keyword>
<keyword id="KW-0963">Cytoplasm</keyword>
<keyword id="KW-0472">Membrane</keyword>
<keyword id="KW-0488">Methylation</keyword>
<keyword id="KW-0539">Nucleus</keyword>
<keyword id="KW-0597">Phosphoprotein</keyword>
<keyword id="KW-1267">Proteomics identification</keyword>
<keyword id="KW-1185">Reference proteome</keyword>
<keyword id="KW-0677">Repeat</keyword>
<keyword id="KW-0694">RNA-binding</keyword>